<sequence length="215" mass="23168">MRRVLITGFEPFGGERINPSWEVVKQMNDLMMGGVRIVARQLPCAFGEALTALNTAIDDVQPVLVLAIGQAGGRADITIERVAINVDDARIPDNLGNQPVDQPIIQEGPAAYFTRLPIKAMVQGIREAGIPASVSQTAGTYVCNHVMYGLLHRLNQFNNEVKGGFIHIPYLPEQAVDHPGAPSMSAQSVLVALELAISIALQIEHDLHITGGPVH</sequence>
<feature type="chain" id="PRO_1000060081" description="Pyrrolidone-carboxylate peptidase">
    <location>
        <begin position="1"/>
        <end position="215"/>
    </location>
</feature>
<feature type="active site" evidence="1">
    <location>
        <position position="80"/>
    </location>
</feature>
<feature type="active site" evidence="1">
    <location>
        <position position="143"/>
    </location>
</feature>
<feature type="active site" evidence="1">
    <location>
        <position position="167"/>
    </location>
</feature>
<evidence type="ECO:0000255" key="1">
    <source>
        <dbReference type="HAMAP-Rule" id="MF_00417"/>
    </source>
</evidence>
<organism>
    <name type="scientific">Yersinia pseudotuberculosis serotype O:1b (strain IP 31758)</name>
    <dbReference type="NCBI Taxonomy" id="349747"/>
    <lineage>
        <taxon>Bacteria</taxon>
        <taxon>Pseudomonadati</taxon>
        <taxon>Pseudomonadota</taxon>
        <taxon>Gammaproteobacteria</taxon>
        <taxon>Enterobacterales</taxon>
        <taxon>Yersiniaceae</taxon>
        <taxon>Yersinia</taxon>
    </lineage>
</organism>
<keyword id="KW-0963">Cytoplasm</keyword>
<keyword id="KW-0378">Hydrolase</keyword>
<keyword id="KW-0645">Protease</keyword>
<keyword id="KW-0788">Thiol protease</keyword>
<proteinExistence type="inferred from homology"/>
<gene>
    <name evidence="1" type="primary">pcp</name>
    <name type="ordered locus">YpsIP31758_1120</name>
</gene>
<name>PCP_YERP3</name>
<reference key="1">
    <citation type="journal article" date="2007" name="PLoS Genet.">
        <title>The complete genome sequence of Yersinia pseudotuberculosis IP31758, the causative agent of Far East scarlet-like fever.</title>
        <authorList>
            <person name="Eppinger M."/>
            <person name="Rosovitz M.J."/>
            <person name="Fricke W.F."/>
            <person name="Rasko D.A."/>
            <person name="Kokorina G."/>
            <person name="Fayolle C."/>
            <person name="Lindler L.E."/>
            <person name="Carniel E."/>
            <person name="Ravel J."/>
        </authorList>
    </citation>
    <scope>NUCLEOTIDE SEQUENCE [LARGE SCALE GENOMIC DNA]</scope>
    <source>
        <strain>IP 31758</strain>
    </source>
</reference>
<protein>
    <recommendedName>
        <fullName evidence="1">Pyrrolidone-carboxylate peptidase</fullName>
        <ecNumber evidence="1">3.4.19.3</ecNumber>
    </recommendedName>
    <alternativeName>
        <fullName evidence="1">5-oxoprolyl-peptidase</fullName>
    </alternativeName>
    <alternativeName>
        <fullName evidence="1">Pyroglutamyl-peptidase I</fullName>
        <shortName evidence="1">PGP-I</shortName>
        <shortName evidence="1">Pyrase</shortName>
    </alternativeName>
</protein>
<dbReference type="EC" id="3.4.19.3" evidence="1"/>
<dbReference type="EMBL" id="CP000720">
    <property type="protein sequence ID" value="ABS48933.1"/>
    <property type="molecule type" value="Genomic_DNA"/>
</dbReference>
<dbReference type="RefSeq" id="WP_012104778.1">
    <property type="nucleotide sequence ID" value="NC_009708.1"/>
</dbReference>
<dbReference type="SMR" id="A7FFS3"/>
<dbReference type="MEROPS" id="C15.001"/>
<dbReference type="KEGG" id="ypi:YpsIP31758_1120"/>
<dbReference type="HOGENOM" id="CLU_043960_4_0_6"/>
<dbReference type="Proteomes" id="UP000002412">
    <property type="component" value="Chromosome"/>
</dbReference>
<dbReference type="GO" id="GO:0005829">
    <property type="term" value="C:cytosol"/>
    <property type="evidence" value="ECO:0007669"/>
    <property type="project" value="InterPro"/>
</dbReference>
<dbReference type="GO" id="GO:0016920">
    <property type="term" value="F:pyroglutamyl-peptidase activity"/>
    <property type="evidence" value="ECO:0007669"/>
    <property type="project" value="UniProtKB-UniRule"/>
</dbReference>
<dbReference type="GO" id="GO:0006508">
    <property type="term" value="P:proteolysis"/>
    <property type="evidence" value="ECO:0007669"/>
    <property type="project" value="UniProtKB-KW"/>
</dbReference>
<dbReference type="CDD" id="cd00501">
    <property type="entry name" value="Peptidase_C15"/>
    <property type="match status" value="1"/>
</dbReference>
<dbReference type="FunFam" id="3.40.630.20:FF:000001">
    <property type="entry name" value="Pyrrolidone-carboxylate peptidase"/>
    <property type="match status" value="1"/>
</dbReference>
<dbReference type="Gene3D" id="3.40.630.20">
    <property type="entry name" value="Peptidase C15, pyroglutamyl peptidase I-like"/>
    <property type="match status" value="1"/>
</dbReference>
<dbReference type="HAMAP" id="MF_00417">
    <property type="entry name" value="Pyrrolid_peptidase"/>
    <property type="match status" value="1"/>
</dbReference>
<dbReference type="InterPro" id="IPR000816">
    <property type="entry name" value="Peptidase_C15"/>
</dbReference>
<dbReference type="InterPro" id="IPR016125">
    <property type="entry name" value="Peptidase_C15-like"/>
</dbReference>
<dbReference type="InterPro" id="IPR036440">
    <property type="entry name" value="Peptidase_C15-like_sf"/>
</dbReference>
<dbReference type="InterPro" id="IPR029762">
    <property type="entry name" value="PGP-I_bact-type"/>
</dbReference>
<dbReference type="InterPro" id="IPR033694">
    <property type="entry name" value="PGPEP1_Cys_AS"/>
</dbReference>
<dbReference type="InterPro" id="IPR033693">
    <property type="entry name" value="PGPEP1_Glu_AS"/>
</dbReference>
<dbReference type="NCBIfam" id="NF009676">
    <property type="entry name" value="PRK13197.1"/>
    <property type="match status" value="1"/>
</dbReference>
<dbReference type="NCBIfam" id="TIGR00504">
    <property type="entry name" value="pyro_pdase"/>
    <property type="match status" value="1"/>
</dbReference>
<dbReference type="PANTHER" id="PTHR23402">
    <property type="entry name" value="PROTEASE FAMILY C15 PYROGLUTAMYL-PEPTIDASE I-RELATED"/>
    <property type="match status" value="1"/>
</dbReference>
<dbReference type="PANTHER" id="PTHR23402:SF1">
    <property type="entry name" value="PYROGLUTAMYL-PEPTIDASE I"/>
    <property type="match status" value="1"/>
</dbReference>
<dbReference type="Pfam" id="PF01470">
    <property type="entry name" value="Peptidase_C15"/>
    <property type="match status" value="1"/>
</dbReference>
<dbReference type="PIRSF" id="PIRSF015592">
    <property type="entry name" value="Prld-crbxl_pptds"/>
    <property type="match status" value="1"/>
</dbReference>
<dbReference type="PRINTS" id="PR00706">
    <property type="entry name" value="PYROGLUPTASE"/>
</dbReference>
<dbReference type="SUPFAM" id="SSF53182">
    <property type="entry name" value="Pyrrolidone carboxyl peptidase (pyroglutamate aminopeptidase)"/>
    <property type="match status" value="1"/>
</dbReference>
<dbReference type="PROSITE" id="PS01334">
    <property type="entry name" value="PYRASE_CYS"/>
    <property type="match status" value="1"/>
</dbReference>
<dbReference type="PROSITE" id="PS01333">
    <property type="entry name" value="PYRASE_GLU"/>
    <property type="match status" value="1"/>
</dbReference>
<accession>A7FFS3</accession>
<comment type="function">
    <text evidence="1">Removes 5-oxoproline from various penultimate amino acid residues except L-proline.</text>
</comment>
<comment type="catalytic activity">
    <reaction evidence="1">
        <text>Release of an N-terminal pyroglutamyl group from a polypeptide, the second amino acid generally not being Pro.</text>
        <dbReference type="EC" id="3.4.19.3"/>
    </reaction>
</comment>
<comment type="subunit">
    <text evidence="1">Homotetramer.</text>
</comment>
<comment type="subcellular location">
    <subcellularLocation>
        <location evidence="1">Cytoplasm</location>
    </subcellularLocation>
</comment>
<comment type="similarity">
    <text evidence="1">Belongs to the peptidase C15 family.</text>
</comment>